<protein>
    <recommendedName>
        <fullName evidence="8">E3 ubiquitin-protein ligase RNF14</fullName>
        <ecNumber evidence="1">2.3.2.31</ecNumber>
    </recommendedName>
    <alternativeName>
        <fullName evidence="8">RING finger protein 14</fullName>
    </alternativeName>
</protein>
<proteinExistence type="evidence at protein level"/>
<evidence type="ECO:0000250" key="1">
    <source>
        <dbReference type="UniProtKB" id="O60260"/>
    </source>
</evidence>
<evidence type="ECO:0000250" key="2">
    <source>
        <dbReference type="UniProtKB" id="Q9UBS8"/>
    </source>
</evidence>
<evidence type="ECO:0000255" key="3">
    <source>
        <dbReference type="PROSITE-ProRule" id="PRU00179"/>
    </source>
</evidence>
<evidence type="ECO:0000255" key="4">
    <source>
        <dbReference type="PROSITE-ProRule" id="PRU01221"/>
    </source>
</evidence>
<evidence type="ECO:0000269" key="5">
    <source>
    </source>
</evidence>
<evidence type="ECO:0000303" key="6">
    <source>
    </source>
</evidence>
<evidence type="ECO:0000303" key="7">
    <source ref="1"/>
</evidence>
<evidence type="ECO:0000305" key="8"/>
<evidence type="ECO:0000312" key="9">
    <source>
        <dbReference type="MGI" id="MGI:1929668"/>
    </source>
</evidence>
<keyword id="KW-0025">Alternative splicing</keyword>
<keyword id="KW-0963">Cytoplasm</keyword>
<keyword id="KW-0479">Metal-binding</keyword>
<keyword id="KW-0539">Nucleus</keyword>
<keyword id="KW-0597">Phosphoprotein</keyword>
<keyword id="KW-1185">Reference proteome</keyword>
<keyword id="KW-0677">Repeat</keyword>
<keyword id="KW-0804">Transcription</keyword>
<keyword id="KW-0805">Transcription regulation</keyword>
<keyword id="KW-0808">Transferase</keyword>
<keyword id="KW-0832">Ubl conjugation</keyword>
<keyword id="KW-0833">Ubl conjugation pathway</keyword>
<keyword id="KW-0862">Zinc</keyword>
<keyword id="KW-0863">Zinc-finger</keyword>
<comment type="function">
    <text evidence="2 5">E3 ubiquitin-protein ligase that plays a key role in the RNF14-RNF25 translation quality control pathway, a pathway that takes place when a ribosome has stalled during translation, and which promotes ubiquitination and degradation of translation factors on stalled ribosomes (By similarity). Recruited to stalled ribosomes by the ribosome collision sensor GCN1 and mediates 'Lys-6'-linked ubiquitination of target proteins, leading to their degradation (By similarity). Mediates ubiquitination of EEF1A1/eEF1A and ETF1/eRF1 translation factors on stalled ribosomes, leading to their degradation (By similarity). Also catalyzes ubiquitination of ribosomal proteins RPL0, RPL1, RPL12, RPS13 and RPS17 (By similarity). Specifically required to resolve RNA-protein cross-links caused by reactive aldehydes, which trigger translation stress by stalling ribosomes: acts by catalying 'Lys-6'-linked ubiquitination of RNA-protein cross-links, leading to their removal by the ATP-dependent unfoldase VCP and subsequent degradation by the proteasome (By similarity). Independently of its function in the response to stalled ribosomes, acts as a regulator of transcription in Wnt signaling via its interaction with TCF transcription factors (TCF7/TCF1, TCF7L1/TCF3 and TCF7L2/TCF4) (By similarity). May also play a role as a coactivator for androgen- and, to a lesser extent, progesterone-dependent transcription (PubMed:24472305).</text>
</comment>
<comment type="catalytic activity">
    <reaction evidence="2">
        <text>[E2 ubiquitin-conjugating enzyme]-S-ubiquitinyl-L-cysteine + [acceptor protein]-L-lysine = [E2 ubiquitin-conjugating enzyme]-L-cysteine + [acceptor protein]-N(6)-ubiquitinyl-L-lysine.</text>
        <dbReference type="EC" id="2.3.2.31"/>
    </reaction>
</comment>
<comment type="pathway">
    <text evidence="2">Protein modification; protein ubiquitination.</text>
</comment>
<comment type="subunit">
    <text evidence="2">Interacts with GCN1; interaction takes place in response to ribosome collisions and is required for ubiquitination of EEF1A1/eEF1A. Interacts with the ubiquitin-conjugating enzymes UBE2E1 and UBE2E2. Interacts with AR/androgen receptor. Interacts with TCF7/TCF1, TCF7L1/TCF3 and TCF7L2/TCF4; promoting Wnt signaling.</text>
</comment>
<comment type="subcellular location">
    <subcellularLocation>
        <location evidence="2">Cytoplasm</location>
    </subcellularLocation>
    <subcellularLocation>
        <location evidence="2">Nucleus</location>
    </subcellularLocation>
</comment>
<comment type="alternative products">
    <event type="alternative splicing"/>
    <isoform>
        <id>Q9JI90-1</id>
        <name>1</name>
        <sequence type="displayed"/>
    </isoform>
    <isoform>
        <id>Q9JI90-2</id>
        <name>2</name>
        <sequence type="described" ref="VSP_005751 VSP_005752"/>
    </isoform>
</comment>
<comment type="domain">
    <text evidence="2">The N-terminal destruction box (D-box) acts as a recognition signal for degradation via the ubiquitin-proteasome pathway.</text>
</comment>
<comment type="domain">
    <text evidence="1">Members of the RBR family are atypical E3 ligases. They interact with the E2 conjugating enzyme UBE2L3 and function like HECT-type E3 enzymes: they bind E2s via the first RING domain, but require an obligate trans-thiolation step during the ubiquitin transfer, requiring a conserved cysteine residue in the second RING domain.</text>
</comment>
<comment type="PTM">
    <text evidence="2">RING-type zinc finger-dependent and UBE2E2-dependent autoubiquitination.</text>
</comment>
<comment type="similarity">
    <text evidence="8">Belongs to the RBR family. RNF14 subfamily.</text>
</comment>
<accession>Q9JI90</accession>
<accession>Q7TPR0</accession>
<accession>Q9D0L2</accession>
<accession>Q9D6N2</accession>
<accession>Q9D6Z8</accession>
<accession>Q9JI89</accession>
<dbReference type="EC" id="2.3.2.31" evidence="1"/>
<dbReference type="EMBL" id="AF249667">
    <property type="protein sequence ID" value="AAF74266.1"/>
    <property type="molecule type" value="mRNA"/>
</dbReference>
<dbReference type="EMBL" id="AF249668">
    <property type="protein sequence ID" value="AAF74267.1"/>
    <property type="molecule type" value="mRNA"/>
</dbReference>
<dbReference type="EMBL" id="AK011316">
    <property type="protein sequence ID" value="BAB27541.1"/>
    <property type="molecule type" value="mRNA"/>
</dbReference>
<dbReference type="EMBL" id="AK009783">
    <property type="protein sequence ID" value="BAB26503.1"/>
    <property type="molecule type" value="mRNA"/>
</dbReference>
<dbReference type="EMBL" id="AK010162">
    <property type="protein sequence ID" value="BAB26741.1"/>
    <property type="molecule type" value="mRNA"/>
</dbReference>
<dbReference type="EMBL" id="CH466528">
    <property type="protein sequence ID" value="EDL10081.1"/>
    <property type="molecule type" value="Genomic_DNA"/>
</dbReference>
<dbReference type="EMBL" id="CH466528">
    <property type="protein sequence ID" value="EDL10082.1"/>
    <property type="molecule type" value="Genomic_DNA"/>
</dbReference>
<dbReference type="EMBL" id="CH466528">
    <property type="protein sequence ID" value="EDL10083.1"/>
    <property type="molecule type" value="Genomic_DNA"/>
</dbReference>
<dbReference type="EMBL" id="CH466528">
    <property type="protein sequence ID" value="EDL10084.1"/>
    <property type="molecule type" value="Genomic_DNA"/>
</dbReference>
<dbReference type="EMBL" id="CH466528">
    <property type="protein sequence ID" value="EDL10087.1"/>
    <property type="molecule type" value="Genomic_DNA"/>
</dbReference>
<dbReference type="EMBL" id="BC054841">
    <property type="protein sequence ID" value="AAH54841.1"/>
    <property type="molecule type" value="mRNA"/>
</dbReference>
<dbReference type="EMBL" id="BC094250">
    <property type="protein sequence ID" value="AAH94250.1"/>
    <property type="molecule type" value="mRNA"/>
</dbReference>
<dbReference type="CCDS" id="CCDS29200.1">
    <molecule id="Q9JI90-1"/>
</dbReference>
<dbReference type="RefSeq" id="NP_001158093.1">
    <molecule id="Q9JI90-1"/>
    <property type="nucleotide sequence ID" value="NM_001164621.1"/>
</dbReference>
<dbReference type="RefSeq" id="NP_001158094.1">
    <property type="nucleotide sequence ID" value="NM_001164622.1"/>
</dbReference>
<dbReference type="RefSeq" id="NP_001348193.1">
    <molecule id="Q9JI90-1"/>
    <property type="nucleotide sequence ID" value="NM_001361264.1"/>
</dbReference>
<dbReference type="RefSeq" id="NP_001348194.1">
    <molecule id="Q9JI90-1"/>
    <property type="nucleotide sequence ID" value="NM_001361265.1"/>
</dbReference>
<dbReference type="RefSeq" id="NP_001348195.1">
    <molecule id="Q9JI90-1"/>
    <property type="nucleotide sequence ID" value="NM_001361266.1"/>
</dbReference>
<dbReference type="RefSeq" id="NP_001348196.1">
    <molecule id="Q9JI90-1"/>
    <property type="nucleotide sequence ID" value="NM_001361267.1"/>
</dbReference>
<dbReference type="RefSeq" id="NP_001348197.1">
    <molecule id="Q9JI90-1"/>
    <property type="nucleotide sequence ID" value="NM_001361268.1"/>
</dbReference>
<dbReference type="RefSeq" id="NP_001348198.1">
    <molecule id="Q9JI90-1"/>
    <property type="nucleotide sequence ID" value="NM_001361269.1"/>
</dbReference>
<dbReference type="RefSeq" id="NP_064396.2">
    <molecule id="Q9JI90-1"/>
    <property type="nucleotide sequence ID" value="NM_020012.2"/>
</dbReference>
<dbReference type="RefSeq" id="XP_006526184.1">
    <property type="nucleotide sequence ID" value="XM_006526121.2"/>
</dbReference>
<dbReference type="RefSeq" id="XP_006526185.1">
    <property type="nucleotide sequence ID" value="XM_006526122.2"/>
</dbReference>
<dbReference type="RefSeq" id="XP_006526186.1">
    <property type="nucleotide sequence ID" value="XM_006526123.2"/>
</dbReference>
<dbReference type="RefSeq" id="XP_006526187.1">
    <property type="nucleotide sequence ID" value="XM_006526124.2"/>
</dbReference>
<dbReference type="RefSeq" id="XP_006526188.1">
    <property type="nucleotide sequence ID" value="XM_006526125.2"/>
</dbReference>
<dbReference type="RefSeq" id="XP_006526189.1">
    <molecule id="Q9JI90-1"/>
    <property type="nucleotide sequence ID" value="XM_006526126.2"/>
</dbReference>
<dbReference type="RefSeq" id="XP_006526190.1">
    <molecule id="Q9JI90-1"/>
    <property type="nucleotide sequence ID" value="XM_006526127.3"/>
</dbReference>
<dbReference type="RefSeq" id="XP_017173444.1">
    <property type="nucleotide sequence ID" value="XM_017317955.1"/>
</dbReference>
<dbReference type="RefSeq" id="XP_017173445.1">
    <molecule id="Q9JI90-1"/>
    <property type="nucleotide sequence ID" value="XM_017317956.2"/>
</dbReference>
<dbReference type="RefSeq" id="XP_017173446.1">
    <molecule id="Q9JI90-1"/>
    <property type="nucleotide sequence ID" value="XM_017317957.1"/>
</dbReference>
<dbReference type="RefSeq" id="XP_030106408.1">
    <molecule id="Q9JI90-1"/>
    <property type="nucleotide sequence ID" value="XM_030250548.1"/>
</dbReference>
<dbReference type="RefSeq" id="XP_036017113.1">
    <molecule id="Q9JI90-1"/>
    <property type="nucleotide sequence ID" value="XM_036161220.1"/>
</dbReference>
<dbReference type="BioGRID" id="208150">
    <property type="interactions" value="11"/>
</dbReference>
<dbReference type="FunCoup" id="Q9JI90">
    <property type="interactions" value="2509"/>
</dbReference>
<dbReference type="IntAct" id="Q9JI90">
    <property type="interactions" value="8"/>
</dbReference>
<dbReference type="MINT" id="Q9JI90"/>
<dbReference type="STRING" id="10090.ENSMUSP00000126205"/>
<dbReference type="GlyGen" id="Q9JI90">
    <property type="glycosylation" value="1 site"/>
</dbReference>
<dbReference type="iPTMnet" id="Q9JI90"/>
<dbReference type="PhosphoSitePlus" id="Q9JI90"/>
<dbReference type="SwissPalm" id="Q9JI90"/>
<dbReference type="PaxDb" id="10090-ENSMUSP00000126205"/>
<dbReference type="PeptideAtlas" id="Q9JI90"/>
<dbReference type="ProteomicsDB" id="300555">
    <molecule id="Q9JI90-1"/>
</dbReference>
<dbReference type="ProteomicsDB" id="300556">
    <molecule id="Q9JI90-2"/>
</dbReference>
<dbReference type="Pumba" id="Q9JI90"/>
<dbReference type="Antibodypedia" id="1304">
    <property type="antibodies" value="262 antibodies from 29 providers"/>
</dbReference>
<dbReference type="DNASU" id="56736"/>
<dbReference type="Ensembl" id="ENSMUST00000072376.13">
    <molecule id="Q9JI90-1"/>
    <property type="protein sequence ID" value="ENSMUSP00000072212.6"/>
    <property type="gene ID" value="ENSMUSG00000060450.15"/>
</dbReference>
<dbReference type="Ensembl" id="ENSMUST00000171461.3">
    <molecule id="Q9JI90-1"/>
    <property type="protein sequence ID" value="ENSMUSP00000126205.2"/>
    <property type="gene ID" value="ENSMUSG00000060450.15"/>
</dbReference>
<dbReference type="Ensembl" id="ENSMUST00000236116.2">
    <molecule id="Q9JI90-1"/>
    <property type="protein sequence ID" value="ENSMUSP00000157833.2"/>
    <property type="gene ID" value="ENSMUSG00000060450.15"/>
</dbReference>
<dbReference type="Ensembl" id="ENSMUST00000236649.2">
    <molecule id="Q9JI90-2"/>
    <property type="protein sequence ID" value="ENSMUSP00000157501.2"/>
    <property type="gene ID" value="ENSMUSG00000060450.15"/>
</dbReference>
<dbReference type="GeneID" id="56736"/>
<dbReference type="KEGG" id="mmu:56736"/>
<dbReference type="UCSC" id="uc008ese.2">
    <molecule id="Q9JI90-1"/>
    <property type="organism name" value="mouse"/>
</dbReference>
<dbReference type="AGR" id="MGI:1929668"/>
<dbReference type="CTD" id="9604"/>
<dbReference type="MGI" id="MGI:1929668">
    <property type="gene designation" value="Rnf14"/>
</dbReference>
<dbReference type="VEuPathDB" id="HostDB:ENSMUSG00000060450"/>
<dbReference type="eggNOG" id="KOG1814">
    <property type="taxonomic scope" value="Eukaryota"/>
</dbReference>
<dbReference type="GeneTree" id="ENSGT00940000154507"/>
<dbReference type="HOGENOM" id="CLU_021364_2_0_1"/>
<dbReference type="InParanoid" id="Q9JI90"/>
<dbReference type="OMA" id="PRSWCQG"/>
<dbReference type="OrthoDB" id="1431934at2759"/>
<dbReference type="PhylomeDB" id="Q9JI90"/>
<dbReference type="TreeFam" id="TF314401"/>
<dbReference type="Reactome" id="R-MMU-983168">
    <property type="pathway name" value="Antigen processing: Ubiquitination &amp; Proteasome degradation"/>
</dbReference>
<dbReference type="UniPathway" id="UPA00143"/>
<dbReference type="BioGRID-ORCS" id="56736">
    <property type="hits" value="6 hits in 79 CRISPR screens"/>
</dbReference>
<dbReference type="ChiTaRS" id="Rnf14">
    <property type="organism name" value="mouse"/>
</dbReference>
<dbReference type="PRO" id="PR:Q9JI90"/>
<dbReference type="Proteomes" id="UP000000589">
    <property type="component" value="Chromosome 18"/>
</dbReference>
<dbReference type="RNAct" id="Q9JI90">
    <property type="molecule type" value="protein"/>
</dbReference>
<dbReference type="Bgee" id="ENSMUSG00000060450">
    <property type="expression patterns" value="Expressed in CA3 field of hippocampus and 278 other cell types or tissues"/>
</dbReference>
<dbReference type="ExpressionAtlas" id="Q9JI90">
    <property type="expression patterns" value="baseline and differential"/>
</dbReference>
<dbReference type="GO" id="GO:0005737">
    <property type="term" value="C:cytoplasm"/>
    <property type="evidence" value="ECO:0000250"/>
    <property type="project" value="UniProtKB"/>
</dbReference>
<dbReference type="GO" id="GO:0022626">
    <property type="term" value="C:cytosolic ribosome"/>
    <property type="evidence" value="ECO:0007669"/>
    <property type="project" value="Ensembl"/>
</dbReference>
<dbReference type="GO" id="GO:0005654">
    <property type="term" value="C:nucleoplasm"/>
    <property type="evidence" value="ECO:0007669"/>
    <property type="project" value="Ensembl"/>
</dbReference>
<dbReference type="GO" id="GO:0005634">
    <property type="term" value="C:nucleus"/>
    <property type="evidence" value="ECO:0000250"/>
    <property type="project" value="UniProtKB"/>
</dbReference>
<dbReference type="GO" id="GO:0050681">
    <property type="term" value="F:nuclear androgen receptor binding"/>
    <property type="evidence" value="ECO:0000250"/>
    <property type="project" value="UniProtKB"/>
</dbReference>
<dbReference type="GO" id="GO:0061630">
    <property type="term" value="F:ubiquitin protein ligase activity"/>
    <property type="evidence" value="ECO:0000250"/>
    <property type="project" value="UniProtKB"/>
</dbReference>
<dbReference type="GO" id="GO:0019787">
    <property type="term" value="F:ubiquitin-like protein transferase activity"/>
    <property type="evidence" value="ECO:0000250"/>
    <property type="project" value="UniProtKB"/>
</dbReference>
<dbReference type="GO" id="GO:0008270">
    <property type="term" value="F:zinc ion binding"/>
    <property type="evidence" value="ECO:0007669"/>
    <property type="project" value="UniProtKB-KW"/>
</dbReference>
<dbReference type="GO" id="GO:0045893">
    <property type="term" value="P:positive regulation of DNA-templated transcription"/>
    <property type="evidence" value="ECO:0000250"/>
    <property type="project" value="UniProtKB"/>
</dbReference>
<dbReference type="GO" id="GO:0085020">
    <property type="term" value="P:protein K6-linked ubiquitination"/>
    <property type="evidence" value="ECO:0007669"/>
    <property type="project" value="Ensembl"/>
</dbReference>
<dbReference type="GO" id="GO:0160127">
    <property type="term" value="P:protein-RNA covalent cross-linking repair"/>
    <property type="evidence" value="ECO:0000250"/>
    <property type="project" value="UniProtKB"/>
</dbReference>
<dbReference type="GO" id="GO:0060765">
    <property type="term" value="P:regulation of androgen receptor signaling pathway"/>
    <property type="evidence" value="ECO:0000250"/>
    <property type="project" value="UniProtKB"/>
</dbReference>
<dbReference type="GO" id="GO:0060828">
    <property type="term" value="P:regulation of canonical Wnt signaling pathway"/>
    <property type="evidence" value="ECO:0000250"/>
    <property type="project" value="UniProtKB"/>
</dbReference>
<dbReference type="GO" id="GO:0006355">
    <property type="term" value="P:regulation of DNA-templated transcription"/>
    <property type="evidence" value="ECO:0000250"/>
    <property type="project" value="UniProtKB"/>
</dbReference>
<dbReference type="GO" id="GO:0072344">
    <property type="term" value="P:rescue of stalled ribosome"/>
    <property type="evidence" value="ECO:0000250"/>
    <property type="project" value="UniProtKB"/>
</dbReference>
<dbReference type="GO" id="GO:0006511">
    <property type="term" value="P:ubiquitin-dependent protein catabolic process"/>
    <property type="evidence" value="ECO:0007669"/>
    <property type="project" value="Ensembl"/>
</dbReference>
<dbReference type="CDD" id="cd20341">
    <property type="entry name" value="BRcat_RBR_RNF14"/>
    <property type="match status" value="1"/>
</dbReference>
<dbReference type="CDD" id="cd20354">
    <property type="entry name" value="Rcat_RBR_RNF14"/>
    <property type="match status" value="1"/>
</dbReference>
<dbReference type="CDD" id="cd16628">
    <property type="entry name" value="RING-HC_RBR_RNF14"/>
    <property type="match status" value="1"/>
</dbReference>
<dbReference type="CDD" id="cd23820">
    <property type="entry name" value="RWD_RNF14"/>
    <property type="match status" value="1"/>
</dbReference>
<dbReference type="FunFam" id="1.20.120.1750:FF:000011">
    <property type="entry name" value="RBR-type E3 ubiquitin transferase"/>
    <property type="match status" value="1"/>
</dbReference>
<dbReference type="FunFam" id="2.20.25.20:FF:000007">
    <property type="entry name" value="RBR-type E3 ubiquitin transferase"/>
    <property type="match status" value="1"/>
</dbReference>
<dbReference type="FunFam" id="3.10.110.10:FF:000049">
    <property type="entry name" value="RBR-type E3 ubiquitin transferase"/>
    <property type="match status" value="1"/>
</dbReference>
<dbReference type="FunFam" id="3.30.40.10:FF:000186">
    <property type="entry name" value="RBR-type E3 ubiquitin transferase"/>
    <property type="match status" value="1"/>
</dbReference>
<dbReference type="Gene3D" id="1.20.120.1750">
    <property type="match status" value="1"/>
</dbReference>
<dbReference type="Gene3D" id="2.20.25.20">
    <property type="match status" value="1"/>
</dbReference>
<dbReference type="Gene3D" id="3.10.110.10">
    <property type="entry name" value="Ubiquitin Conjugating Enzyme"/>
    <property type="match status" value="1"/>
</dbReference>
<dbReference type="Gene3D" id="3.30.40.10">
    <property type="entry name" value="Zinc/RING finger domain, C3HC4 (zinc finger)"/>
    <property type="match status" value="1"/>
</dbReference>
<dbReference type="InterPro" id="IPR031127">
    <property type="entry name" value="E3_UB_ligase_RBR"/>
</dbReference>
<dbReference type="InterPro" id="IPR002867">
    <property type="entry name" value="IBR_dom"/>
</dbReference>
<dbReference type="InterPro" id="IPR047548">
    <property type="entry name" value="Rcat_RBR_RNF14"/>
</dbReference>
<dbReference type="InterPro" id="IPR031128">
    <property type="entry name" value="RNF14_RING-HC_Zfn"/>
</dbReference>
<dbReference type="InterPro" id="IPR006575">
    <property type="entry name" value="RWD_dom"/>
</dbReference>
<dbReference type="InterPro" id="IPR044066">
    <property type="entry name" value="TRIAD_supradom"/>
</dbReference>
<dbReference type="InterPro" id="IPR016135">
    <property type="entry name" value="UBQ-conjugating_enzyme/RWD"/>
</dbReference>
<dbReference type="InterPro" id="IPR001841">
    <property type="entry name" value="Znf_RING"/>
</dbReference>
<dbReference type="InterPro" id="IPR013083">
    <property type="entry name" value="Znf_RING/FYVE/PHD"/>
</dbReference>
<dbReference type="InterPro" id="IPR017907">
    <property type="entry name" value="Znf_RING_CS"/>
</dbReference>
<dbReference type="PANTHER" id="PTHR11685">
    <property type="entry name" value="RBR FAMILY RING FINGER AND IBR DOMAIN-CONTAINING"/>
    <property type="match status" value="1"/>
</dbReference>
<dbReference type="Pfam" id="PF01485">
    <property type="entry name" value="IBR"/>
    <property type="match status" value="1"/>
</dbReference>
<dbReference type="Pfam" id="PF22191">
    <property type="entry name" value="IBR_1"/>
    <property type="match status" value="1"/>
</dbReference>
<dbReference type="Pfam" id="PF05773">
    <property type="entry name" value="RWD"/>
    <property type="match status" value="1"/>
</dbReference>
<dbReference type="SMART" id="SM00647">
    <property type="entry name" value="IBR"/>
    <property type="match status" value="2"/>
</dbReference>
<dbReference type="SMART" id="SM00591">
    <property type="entry name" value="RWD"/>
    <property type="match status" value="1"/>
</dbReference>
<dbReference type="SUPFAM" id="SSF57850">
    <property type="entry name" value="RING/U-box"/>
    <property type="match status" value="3"/>
</dbReference>
<dbReference type="SUPFAM" id="SSF54495">
    <property type="entry name" value="UBC-like"/>
    <property type="match status" value="1"/>
</dbReference>
<dbReference type="PROSITE" id="PS50908">
    <property type="entry name" value="RWD"/>
    <property type="match status" value="1"/>
</dbReference>
<dbReference type="PROSITE" id="PS51873">
    <property type="entry name" value="TRIAD"/>
    <property type="match status" value="1"/>
</dbReference>
<dbReference type="PROSITE" id="PS00518">
    <property type="entry name" value="ZF_RING_1"/>
    <property type="match status" value="1"/>
</dbReference>
<dbReference type="PROSITE" id="PS50089">
    <property type="entry name" value="ZF_RING_2"/>
    <property type="match status" value="1"/>
</dbReference>
<organism>
    <name type="scientific">Mus musculus</name>
    <name type="common">Mouse</name>
    <dbReference type="NCBI Taxonomy" id="10090"/>
    <lineage>
        <taxon>Eukaryota</taxon>
        <taxon>Metazoa</taxon>
        <taxon>Chordata</taxon>
        <taxon>Craniata</taxon>
        <taxon>Vertebrata</taxon>
        <taxon>Euteleostomi</taxon>
        <taxon>Mammalia</taxon>
        <taxon>Eutheria</taxon>
        <taxon>Euarchontoglires</taxon>
        <taxon>Glires</taxon>
        <taxon>Rodentia</taxon>
        <taxon>Myomorpha</taxon>
        <taxon>Muroidea</taxon>
        <taxon>Muridae</taxon>
        <taxon>Murinae</taxon>
        <taxon>Mus</taxon>
        <taxon>Mus</taxon>
    </lineage>
</organism>
<gene>
    <name evidence="6 9" type="primary">Rnf14</name>
    <name evidence="7" type="synonym">Triad2</name>
</gene>
<name>RNF14_MOUSE</name>
<sequence length="485" mass="54926">MSAEDLEAQEDELLALASIYDADEFRKAESVQGGETRIYLDLPQNFKIFVSGNSNESLQNSGFEYTICFLPPLVLNFELPPDYPSSSPPSFTLSGKWLSPTQLSALCKHLDNLWEEHRGRVVLFAWMQFLKEETLTYLNIVSPFELKMGSQKKVQRRATAQASSSTELGVGGAAAADVDQEETVDERAVQDVESLSSLIQEILDFNQARQTKCFNSKLFLCSICFCEKLGSDCMYFLECKHVYCKACLKDYFEIQIKDGQVKCLNCPEPQCPSVATPGQVKELVEADLFARYDRLLLQSTLDLMADVVYCPRPCCQLPVMQEPGGTMAICSSCNFAFCTLCRLTYHGLSPCKVTAEKLIDLRNEYLQADEATKRFLEQRYGKRVIQKALEEMESKDWLEKNSKSCPCCGTPIQKLDGCNKMTCTGCMQYFCWICMGSLSRANPYRHFTDSESPCFNRLFHAVDINGDMWEDEIEEDDDDEDDDDD</sequence>
<feature type="chain" id="PRO_0000056058" description="E3 ubiquitin-protein ligase RNF14">
    <location>
        <begin position="1"/>
        <end position="485"/>
    </location>
</feature>
<feature type="domain" description="RWD" evidence="3">
    <location>
        <begin position="11"/>
        <end position="137"/>
    </location>
</feature>
<feature type="zinc finger region" description="RING-type 1" evidence="4">
    <location>
        <begin position="221"/>
        <end position="271"/>
    </location>
</feature>
<feature type="zinc finger region" description="IBR-type" evidence="4">
    <location>
        <begin position="290"/>
        <end position="351"/>
    </location>
</feature>
<feature type="zinc finger region" description="RING-type 2; atypical" evidence="4">
    <location>
        <begin position="405"/>
        <end position="434"/>
    </location>
</feature>
<feature type="region of interest" description="TRIAD supradomain" evidence="4">
    <location>
        <begin position="217"/>
        <end position="458"/>
    </location>
</feature>
<feature type="short sequence motif" description="D-box">
    <location>
        <begin position="37"/>
        <end position="45"/>
    </location>
</feature>
<feature type="active site" evidence="4">
    <location>
        <position position="418"/>
    </location>
</feature>
<feature type="binding site" evidence="4">
    <location>
        <position position="221"/>
    </location>
    <ligand>
        <name>Zn(2+)</name>
        <dbReference type="ChEBI" id="CHEBI:29105"/>
        <label>1</label>
    </ligand>
</feature>
<feature type="binding site" evidence="4">
    <location>
        <position position="224"/>
    </location>
    <ligand>
        <name>Zn(2+)</name>
        <dbReference type="ChEBI" id="CHEBI:29105"/>
        <label>1</label>
    </ligand>
</feature>
<feature type="binding site" evidence="4">
    <location>
        <position position="239"/>
    </location>
    <ligand>
        <name>Zn(2+)</name>
        <dbReference type="ChEBI" id="CHEBI:29105"/>
        <label>2</label>
    </ligand>
</feature>
<feature type="binding site" evidence="4">
    <location>
        <position position="241"/>
    </location>
    <ligand>
        <name>Zn(2+)</name>
        <dbReference type="ChEBI" id="CHEBI:29105"/>
        <label>2</label>
    </ligand>
</feature>
<feature type="binding site" evidence="4">
    <location>
        <position position="244"/>
    </location>
    <ligand>
        <name>Zn(2+)</name>
        <dbReference type="ChEBI" id="CHEBI:29105"/>
        <label>1</label>
    </ligand>
</feature>
<feature type="binding site" evidence="4">
    <location>
        <position position="247"/>
    </location>
    <ligand>
        <name>Zn(2+)</name>
        <dbReference type="ChEBI" id="CHEBI:29105"/>
        <label>1</label>
    </ligand>
</feature>
<feature type="binding site" evidence="4">
    <location>
        <position position="266"/>
    </location>
    <ligand>
        <name>Zn(2+)</name>
        <dbReference type="ChEBI" id="CHEBI:29105"/>
        <label>2</label>
    </ligand>
</feature>
<feature type="binding site" evidence="4">
    <location>
        <position position="271"/>
    </location>
    <ligand>
        <name>Zn(2+)</name>
        <dbReference type="ChEBI" id="CHEBI:29105"/>
        <label>2</label>
    </ligand>
</feature>
<feature type="binding site" evidence="4">
    <location>
        <position position="310"/>
    </location>
    <ligand>
        <name>Zn(2+)</name>
        <dbReference type="ChEBI" id="CHEBI:29105"/>
        <label>3</label>
    </ligand>
</feature>
<feature type="binding site" evidence="4">
    <location>
        <position position="315"/>
    </location>
    <ligand>
        <name>Zn(2+)</name>
        <dbReference type="ChEBI" id="CHEBI:29105"/>
        <label>3</label>
    </ligand>
</feature>
<feature type="binding site" evidence="4">
    <location>
        <position position="330"/>
    </location>
    <ligand>
        <name>Zn(2+)</name>
        <dbReference type="ChEBI" id="CHEBI:29105"/>
        <label>3</label>
    </ligand>
</feature>
<feature type="binding site" evidence="4">
    <location>
        <position position="333"/>
    </location>
    <ligand>
        <name>Zn(2+)</name>
        <dbReference type="ChEBI" id="CHEBI:29105"/>
        <label>3</label>
    </ligand>
</feature>
<feature type="binding site" evidence="4">
    <location>
        <position position="338"/>
    </location>
    <ligand>
        <name>Zn(2+)</name>
        <dbReference type="ChEBI" id="CHEBI:29105"/>
        <label>4</label>
    </ligand>
</feature>
<feature type="binding site" evidence="4">
    <location>
        <position position="341"/>
    </location>
    <ligand>
        <name>Zn(2+)</name>
        <dbReference type="ChEBI" id="CHEBI:29105"/>
        <label>4</label>
    </ligand>
</feature>
<feature type="binding site" evidence="4">
    <location>
        <position position="346"/>
    </location>
    <ligand>
        <name>Zn(2+)</name>
        <dbReference type="ChEBI" id="CHEBI:29105"/>
        <label>4</label>
    </ligand>
</feature>
<feature type="binding site" evidence="4">
    <location>
        <position position="351"/>
    </location>
    <ligand>
        <name>Zn(2+)</name>
        <dbReference type="ChEBI" id="CHEBI:29105"/>
        <label>4</label>
    </ligand>
</feature>
<feature type="binding site" evidence="4">
    <location>
        <position position="405"/>
    </location>
    <ligand>
        <name>Zn(2+)</name>
        <dbReference type="ChEBI" id="CHEBI:29105"/>
        <label>5</label>
    </ligand>
</feature>
<feature type="binding site" evidence="4">
    <location>
        <position position="408"/>
    </location>
    <ligand>
        <name>Zn(2+)</name>
        <dbReference type="ChEBI" id="CHEBI:29105"/>
        <label>5</label>
    </ligand>
</feature>
<feature type="binding site" evidence="4">
    <location>
        <position position="423"/>
    </location>
    <ligand>
        <name>Zn(2+)</name>
        <dbReference type="ChEBI" id="CHEBI:29105"/>
        <label>5</label>
    </ligand>
</feature>
<feature type="binding site" evidence="4">
    <location>
        <position position="426"/>
    </location>
    <ligand>
        <name>Zn(2+)</name>
        <dbReference type="ChEBI" id="CHEBI:29105"/>
        <label>5</label>
    </ligand>
</feature>
<feature type="binding site" evidence="4">
    <location>
        <position position="431"/>
    </location>
    <ligand>
        <name>Zn(2+)</name>
        <dbReference type="ChEBI" id="CHEBI:29105"/>
        <label>6</label>
    </ligand>
</feature>
<feature type="binding site" evidence="4">
    <location>
        <position position="434"/>
    </location>
    <ligand>
        <name>Zn(2+)</name>
        <dbReference type="ChEBI" id="CHEBI:29105"/>
        <label>6</label>
    </ligand>
</feature>
<feature type="binding site" evidence="4">
    <location>
        <position position="446"/>
    </location>
    <ligand>
        <name>Zn(2+)</name>
        <dbReference type="ChEBI" id="CHEBI:29105"/>
        <label>6</label>
    </ligand>
</feature>
<feature type="binding site" evidence="4">
    <location>
        <position position="454"/>
    </location>
    <ligand>
        <name>Zn(2+)</name>
        <dbReference type="ChEBI" id="CHEBI:29105"/>
        <label>6</label>
    </ligand>
</feature>
<feature type="modified residue" description="Phosphoserine" evidence="2">
    <location>
        <position position="349"/>
    </location>
</feature>
<feature type="splice variant" id="VSP_005751" description="In isoform 2." evidence="7">
    <original>GNSNESLQNSGFEYTICFLPPLVLNFEL</original>
    <variation>ALCSLQAPRQPVGRTPRQSGAVCLDAVS</variation>
    <location>
        <begin position="52"/>
        <end position="79"/>
    </location>
</feature>
<feature type="splice variant" id="VSP_005752" description="In isoform 2." evidence="7">
    <location>
        <begin position="80"/>
        <end position="485"/>
    </location>
</feature>
<feature type="sequence conflict" description="In Ref. 1; AAF74266/AAF74267." evidence="8" ref="1">
    <original>A</original>
    <variation>V</variation>
    <location>
        <position position="22"/>
    </location>
</feature>
<feature type="sequence conflict" description="In Ref. 2; BAB26503." evidence="8" ref="2">
    <original>G</original>
    <variation>R</variation>
    <location>
        <position position="62"/>
    </location>
</feature>
<feature type="sequence conflict" description="In Ref. 2; BAB26503/BAB26741." evidence="8" ref="2">
    <original>LSAL</original>
    <variation>GTLV</variation>
    <location>
        <begin position="103"/>
        <end position="106"/>
    </location>
</feature>
<reference key="1">
    <citation type="submission" date="2000-03" db="EMBL/GenBank/DDBJ databases">
        <title>Identification of a novel TRIAD protein, TRIAD2.</title>
        <authorList>
            <person name="Van der Reijden B.A."/>
            <person name="Jansen J.H."/>
        </authorList>
    </citation>
    <scope>NUCLEOTIDE SEQUENCE [MRNA] (ISOFORMS 1 AND 2)</scope>
</reference>
<reference key="2">
    <citation type="journal article" date="2005" name="Science">
        <title>The transcriptional landscape of the mammalian genome.</title>
        <authorList>
            <person name="Carninci P."/>
            <person name="Kasukawa T."/>
            <person name="Katayama S."/>
            <person name="Gough J."/>
            <person name="Frith M.C."/>
            <person name="Maeda N."/>
            <person name="Oyama R."/>
            <person name="Ravasi T."/>
            <person name="Lenhard B."/>
            <person name="Wells C."/>
            <person name="Kodzius R."/>
            <person name="Shimokawa K."/>
            <person name="Bajic V.B."/>
            <person name="Brenner S.E."/>
            <person name="Batalov S."/>
            <person name="Forrest A.R."/>
            <person name="Zavolan M."/>
            <person name="Davis M.J."/>
            <person name="Wilming L.G."/>
            <person name="Aidinis V."/>
            <person name="Allen J.E."/>
            <person name="Ambesi-Impiombato A."/>
            <person name="Apweiler R."/>
            <person name="Aturaliya R.N."/>
            <person name="Bailey T.L."/>
            <person name="Bansal M."/>
            <person name="Baxter L."/>
            <person name="Beisel K.W."/>
            <person name="Bersano T."/>
            <person name="Bono H."/>
            <person name="Chalk A.M."/>
            <person name="Chiu K.P."/>
            <person name="Choudhary V."/>
            <person name="Christoffels A."/>
            <person name="Clutterbuck D.R."/>
            <person name="Crowe M.L."/>
            <person name="Dalla E."/>
            <person name="Dalrymple B.P."/>
            <person name="de Bono B."/>
            <person name="Della Gatta G."/>
            <person name="di Bernardo D."/>
            <person name="Down T."/>
            <person name="Engstrom P."/>
            <person name="Fagiolini M."/>
            <person name="Faulkner G."/>
            <person name="Fletcher C.F."/>
            <person name="Fukushima T."/>
            <person name="Furuno M."/>
            <person name="Futaki S."/>
            <person name="Gariboldi M."/>
            <person name="Georgii-Hemming P."/>
            <person name="Gingeras T.R."/>
            <person name="Gojobori T."/>
            <person name="Green R.E."/>
            <person name="Gustincich S."/>
            <person name="Harbers M."/>
            <person name="Hayashi Y."/>
            <person name="Hensch T.K."/>
            <person name="Hirokawa N."/>
            <person name="Hill D."/>
            <person name="Huminiecki L."/>
            <person name="Iacono M."/>
            <person name="Ikeo K."/>
            <person name="Iwama A."/>
            <person name="Ishikawa T."/>
            <person name="Jakt M."/>
            <person name="Kanapin A."/>
            <person name="Katoh M."/>
            <person name="Kawasawa Y."/>
            <person name="Kelso J."/>
            <person name="Kitamura H."/>
            <person name="Kitano H."/>
            <person name="Kollias G."/>
            <person name="Krishnan S.P."/>
            <person name="Kruger A."/>
            <person name="Kummerfeld S.K."/>
            <person name="Kurochkin I.V."/>
            <person name="Lareau L.F."/>
            <person name="Lazarevic D."/>
            <person name="Lipovich L."/>
            <person name="Liu J."/>
            <person name="Liuni S."/>
            <person name="McWilliam S."/>
            <person name="Madan Babu M."/>
            <person name="Madera M."/>
            <person name="Marchionni L."/>
            <person name="Matsuda H."/>
            <person name="Matsuzawa S."/>
            <person name="Miki H."/>
            <person name="Mignone F."/>
            <person name="Miyake S."/>
            <person name="Morris K."/>
            <person name="Mottagui-Tabar S."/>
            <person name="Mulder N."/>
            <person name="Nakano N."/>
            <person name="Nakauchi H."/>
            <person name="Ng P."/>
            <person name="Nilsson R."/>
            <person name="Nishiguchi S."/>
            <person name="Nishikawa S."/>
            <person name="Nori F."/>
            <person name="Ohara O."/>
            <person name="Okazaki Y."/>
            <person name="Orlando V."/>
            <person name="Pang K.C."/>
            <person name="Pavan W.J."/>
            <person name="Pavesi G."/>
            <person name="Pesole G."/>
            <person name="Petrovsky N."/>
            <person name="Piazza S."/>
            <person name="Reed J."/>
            <person name="Reid J.F."/>
            <person name="Ring B.Z."/>
            <person name="Ringwald M."/>
            <person name="Rost B."/>
            <person name="Ruan Y."/>
            <person name="Salzberg S.L."/>
            <person name="Sandelin A."/>
            <person name="Schneider C."/>
            <person name="Schoenbach C."/>
            <person name="Sekiguchi K."/>
            <person name="Semple C.A."/>
            <person name="Seno S."/>
            <person name="Sessa L."/>
            <person name="Sheng Y."/>
            <person name="Shibata Y."/>
            <person name="Shimada H."/>
            <person name="Shimada K."/>
            <person name="Silva D."/>
            <person name="Sinclair B."/>
            <person name="Sperling S."/>
            <person name="Stupka E."/>
            <person name="Sugiura K."/>
            <person name="Sultana R."/>
            <person name="Takenaka Y."/>
            <person name="Taki K."/>
            <person name="Tammoja K."/>
            <person name="Tan S.L."/>
            <person name="Tang S."/>
            <person name="Taylor M.S."/>
            <person name="Tegner J."/>
            <person name="Teichmann S.A."/>
            <person name="Ueda H.R."/>
            <person name="van Nimwegen E."/>
            <person name="Verardo R."/>
            <person name="Wei C.L."/>
            <person name="Yagi K."/>
            <person name="Yamanishi H."/>
            <person name="Zabarovsky E."/>
            <person name="Zhu S."/>
            <person name="Zimmer A."/>
            <person name="Hide W."/>
            <person name="Bult C."/>
            <person name="Grimmond S.M."/>
            <person name="Teasdale R.D."/>
            <person name="Liu E.T."/>
            <person name="Brusic V."/>
            <person name="Quackenbush J."/>
            <person name="Wahlestedt C."/>
            <person name="Mattick J.S."/>
            <person name="Hume D.A."/>
            <person name="Kai C."/>
            <person name="Sasaki D."/>
            <person name="Tomaru Y."/>
            <person name="Fukuda S."/>
            <person name="Kanamori-Katayama M."/>
            <person name="Suzuki M."/>
            <person name="Aoki J."/>
            <person name="Arakawa T."/>
            <person name="Iida J."/>
            <person name="Imamura K."/>
            <person name="Itoh M."/>
            <person name="Kato T."/>
            <person name="Kawaji H."/>
            <person name="Kawagashira N."/>
            <person name="Kawashima T."/>
            <person name="Kojima M."/>
            <person name="Kondo S."/>
            <person name="Konno H."/>
            <person name="Nakano K."/>
            <person name="Ninomiya N."/>
            <person name="Nishio T."/>
            <person name="Okada M."/>
            <person name="Plessy C."/>
            <person name="Shibata K."/>
            <person name="Shiraki T."/>
            <person name="Suzuki S."/>
            <person name="Tagami M."/>
            <person name="Waki K."/>
            <person name="Watahiki A."/>
            <person name="Okamura-Oho Y."/>
            <person name="Suzuki H."/>
            <person name="Kawai J."/>
            <person name="Hayashizaki Y."/>
        </authorList>
    </citation>
    <scope>NUCLEOTIDE SEQUENCE [LARGE SCALE MRNA] (ISOFORM 1)</scope>
    <source>
        <strain>C57BL/6J</strain>
        <tissue>Embryo</tissue>
        <tissue>Tongue</tissue>
    </source>
</reference>
<reference key="3">
    <citation type="submission" date="2005-09" db="EMBL/GenBank/DDBJ databases">
        <authorList>
            <person name="Mural R.J."/>
            <person name="Adams M.D."/>
            <person name="Myers E.W."/>
            <person name="Smith H.O."/>
            <person name="Venter J.C."/>
        </authorList>
    </citation>
    <scope>NUCLEOTIDE SEQUENCE [LARGE SCALE GENOMIC DNA]</scope>
</reference>
<reference key="4">
    <citation type="journal article" date="2004" name="Genome Res.">
        <title>The status, quality, and expansion of the NIH full-length cDNA project: the Mammalian Gene Collection (MGC).</title>
        <authorList>
            <consortium name="The MGC Project Team"/>
        </authorList>
    </citation>
    <scope>NUCLEOTIDE SEQUENCE [LARGE SCALE MRNA] (ISOFORM 1)</scope>
    <source>
        <strain>C57BL/6J</strain>
        <tissue>Brain</tissue>
        <tissue>Eye</tissue>
    </source>
</reference>
<reference key="5">
    <citation type="journal article" date="2010" name="Cell">
        <title>A tissue-specific atlas of mouse protein phosphorylation and expression.</title>
        <authorList>
            <person name="Huttlin E.L."/>
            <person name="Jedrychowski M.P."/>
            <person name="Elias J.E."/>
            <person name="Goswami T."/>
            <person name="Rad R."/>
            <person name="Beausoleil S.A."/>
            <person name="Villen J."/>
            <person name="Haas W."/>
            <person name="Sowa M.E."/>
            <person name="Gygi S.P."/>
        </authorList>
    </citation>
    <scope>IDENTIFICATION BY MASS SPECTROMETRY [LARGE SCALE ANALYSIS]</scope>
    <source>
        <tissue>Brain</tissue>
    </source>
</reference>
<reference key="6">
    <citation type="journal article" date="2014" name="BMC Syst. Biol.">
        <title>RNF14 is a regulator of mitochondrial and immune function in muscle.</title>
        <authorList>
            <person name="Ingham A.B."/>
            <person name="Osborne S.A."/>
            <person name="Menzies M."/>
            <person name="Briscoe S."/>
            <person name="Chen W."/>
            <person name="Kongsuwan K."/>
            <person name="Reverter A."/>
            <person name="Jeanes A."/>
            <person name="Dalrymple B.P."/>
            <person name="Wijffels G."/>
            <person name="Seymour R."/>
            <person name="Hudson N.J."/>
        </authorList>
    </citation>
    <scope>FUNCTION</scope>
</reference>